<reference key="1">
    <citation type="journal article" date="1979" name="Nature">
        <title>Primary structure of a chloramphenicol acetyltransferase specified by R plasmids.</title>
        <authorList>
            <person name="Shaw W.V."/>
            <person name="Packman L.C."/>
            <person name="Burleigh B.D."/>
            <person name="Dell A."/>
            <person name="Morris H.R."/>
            <person name="Hartley B.S."/>
        </authorList>
    </citation>
    <scope>PROTEIN SEQUENCE</scope>
    <source>
        <plasmid>JR66B</plasmid>
    </source>
</reference>
<reference key="2">
    <citation type="journal article" date="1979" name="Nature">
        <title>Nucleotide sequence analysis of the chloramphenicol resistance transposon Tn9.</title>
        <authorList>
            <person name="Alton N.K."/>
            <person name="Vapnek D."/>
        </authorList>
    </citation>
    <scope>NUCLEOTIDE SEQUENCE [GENOMIC DNA]</scope>
    <source>
        <transposon>Tn9</transposon>
    </source>
</reference>
<reference key="3">
    <citation type="journal article" date="1980" name="FEBS Lett.">
        <title>The DNA sequence of an IS/-flanked transposon coding for resistance to chloramphenicol and fusidic acid.</title>
        <authorList>
            <person name="Marcoli R."/>
            <person name="Iida S."/>
            <person name="Bickle T.A."/>
        </authorList>
    </citation>
    <scope>NUCLEOTIDE SEQUENCE [GENOMIC DNA]</scope>
    <source>
        <transposon>TnCAM204</transposon>
    </source>
</reference>
<reference key="4">
    <citation type="journal article" date="1997" name="Science">
        <title>The structure of nitric oxide synthase oxygenase domain and inhibitor complexes.</title>
        <authorList>
            <person name="Crane B.R."/>
            <person name="Arvai A.S."/>
            <person name="Gachhui R."/>
            <person name="Wu C."/>
            <person name="Ghosh D.K."/>
            <person name="Getzoff E.D."/>
            <person name="Stuehr D.J."/>
            <person name="Tainer J.A."/>
        </authorList>
    </citation>
    <scope>X-RAY CRYSTALLOGRAPHY (2.6 ANGSTROMS) OF 5-217 IN COMPLEX WITH NOS2</scope>
</reference>
<dbReference type="EC" id="2.3.1.28"/>
<dbReference type="EMBL" id="V00623">
    <property type="protein sequence ID" value="CAA23900.1"/>
    <property type="molecule type" value="Genomic_DNA"/>
</dbReference>
<dbReference type="EMBL" id="V00622">
    <property type="protein sequence ID" value="CAA23899.1"/>
    <property type="molecule type" value="Genomic_DNA"/>
</dbReference>
<dbReference type="PIR" id="A93220">
    <property type="entry name" value="XXECC1"/>
</dbReference>
<dbReference type="RefSeq" id="YP_001096419.1">
    <property type="nucleotide sequence ID" value="NC_009133.1"/>
</dbReference>
<dbReference type="RefSeq" id="YP_001816591.1">
    <property type="nucleotide sequence ID" value="NC_010558.1"/>
</dbReference>
<dbReference type="RefSeq" id="YP_008995272.1">
    <property type="nucleotide sequence ID" value="NC_023277.2"/>
</dbReference>
<dbReference type="RefSeq" id="YP_008997430.1">
    <property type="nucleotide sequence ID" value="NC_023289.2"/>
</dbReference>
<dbReference type="RefSeq" id="YP_009068571.1">
    <property type="nucleotide sequence ID" value="NC_025141.1"/>
</dbReference>
<dbReference type="RefSeq" id="YP_009071093.1">
    <property type="nucleotide sequence ID" value="NC_025179.1"/>
</dbReference>
<dbReference type="RefSeq" id="YP_009071408.1">
    <property type="nucleotide sequence ID" value="NC_025181.1"/>
</dbReference>
<dbReference type="RefSeq" id="YP_025721.1">
    <property type="nucleotide sequence ID" value="NC_005923.1"/>
</dbReference>
<dbReference type="PDB" id="1NOC">
    <property type="method" value="X-ray"/>
    <property type="resolution" value="2.60 A"/>
    <property type="chains" value="B=1-219"/>
</dbReference>
<dbReference type="PDB" id="1PD5">
    <property type="method" value="X-ray"/>
    <property type="resolution" value="2.50 A"/>
    <property type="chains" value="A/B/C/D/E/F/G/H/I/J/K/L=1-219"/>
</dbReference>
<dbReference type="PDB" id="1Q23">
    <property type="method" value="X-ray"/>
    <property type="resolution" value="2.18 A"/>
    <property type="chains" value="A/B/C/D/E/F/G/H/I/J/K/L=1-219"/>
</dbReference>
<dbReference type="PDB" id="3U9B">
    <property type="method" value="X-ray"/>
    <property type="resolution" value="3.20 A"/>
    <property type="chains" value="A/B/C/D/E/F/G/H/I=1-219"/>
</dbReference>
<dbReference type="PDB" id="3U9F">
    <property type="method" value="X-ray"/>
    <property type="resolution" value="2.90 A"/>
    <property type="chains" value="A/B/C/D/E/F/G/H/I/J/K/L/M/N/O/P/R/S=1-219"/>
</dbReference>
<dbReference type="PDBsum" id="1NOC"/>
<dbReference type="PDBsum" id="1PD5"/>
<dbReference type="PDBsum" id="1Q23"/>
<dbReference type="PDBsum" id="3U9B"/>
<dbReference type="PDBsum" id="3U9F"/>
<dbReference type="SMR" id="P62577"/>
<dbReference type="MINT" id="P62577"/>
<dbReference type="KEGG" id="ag:CAA23899"/>
<dbReference type="OMA" id="VHHGLMD"/>
<dbReference type="BRENDA" id="2.3.1.28">
    <property type="organism ID" value="2026"/>
</dbReference>
<dbReference type="EvolutionaryTrace" id="P62577"/>
<dbReference type="GO" id="GO:0008811">
    <property type="term" value="F:chloramphenicol O-acetyltransferase activity"/>
    <property type="evidence" value="ECO:0007669"/>
    <property type="project" value="UniProtKB-EC"/>
</dbReference>
<dbReference type="GO" id="GO:0046677">
    <property type="term" value="P:response to antibiotic"/>
    <property type="evidence" value="ECO:0007669"/>
    <property type="project" value="UniProtKB-KW"/>
</dbReference>
<dbReference type="Gene3D" id="3.30.559.10">
    <property type="entry name" value="Chloramphenicol acetyltransferase-like domain"/>
    <property type="match status" value="1"/>
</dbReference>
<dbReference type="InterPro" id="IPR023213">
    <property type="entry name" value="CAT-like_dom_sf"/>
</dbReference>
<dbReference type="InterPro" id="IPR018372">
    <property type="entry name" value="Chloramphenicol_AcTrfase_AS"/>
</dbReference>
<dbReference type="InterPro" id="IPR001707">
    <property type="entry name" value="Cmp_AcTrfase"/>
</dbReference>
<dbReference type="NCBIfam" id="NF000491">
    <property type="entry name" value="chloram_CatA"/>
    <property type="match status" value="1"/>
</dbReference>
<dbReference type="PANTHER" id="PTHR38474:SF2">
    <property type="entry name" value="CHLORAMPHENICOL ACETYLTRANSFERASE"/>
    <property type="match status" value="1"/>
</dbReference>
<dbReference type="PANTHER" id="PTHR38474">
    <property type="entry name" value="SLR0299 PROTEIN"/>
    <property type="match status" value="1"/>
</dbReference>
<dbReference type="Pfam" id="PF00302">
    <property type="entry name" value="CAT"/>
    <property type="match status" value="1"/>
</dbReference>
<dbReference type="PIRSF" id="PIRSF000440">
    <property type="entry name" value="CAT"/>
    <property type="match status" value="1"/>
</dbReference>
<dbReference type="SMART" id="SM01059">
    <property type="entry name" value="CAT"/>
    <property type="match status" value="1"/>
</dbReference>
<dbReference type="SUPFAM" id="SSF52777">
    <property type="entry name" value="CoA-dependent acyltransferases"/>
    <property type="match status" value="1"/>
</dbReference>
<dbReference type="PROSITE" id="PS00100">
    <property type="entry name" value="CAT"/>
    <property type="match status" value="1"/>
</dbReference>
<feature type="chain" id="PRO_0000165865" description="Chloramphenicol acetyltransferase">
    <location>
        <begin position="1"/>
        <end position="219"/>
    </location>
</feature>
<feature type="active site" description="Proton acceptor">
    <location>
        <position position="193"/>
    </location>
</feature>
<feature type="strand" evidence="5">
    <location>
        <begin position="8"/>
        <end position="10"/>
    </location>
</feature>
<feature type="helix" evidence="5">
    <location>
        <begin position="13"/>
        <end position="15"/>
    </location>
</feature>
<feature type="helix" evidence="5">
    <location>
        <begin position="19"/>
        <end position="25"/>
    </location>
</feature>
<feature type="turn" evidence="5">
    <location>
        <begin position="26"/>
        <end position="29"/>
    </location>
</feature>
<feature type="strand" evidence="5">
    <location>
        <begin position="31"/>
        <end position="40"/>
    </location>
</feature>
<feature type="helix" evidence="5">
    <location>
        <begin position="42"/>
        <end position="50"/>
    </location>
</feature>
<feature type="helix" evidence="5">
    <location>
        <begin position="55"/>
        <end position="67"/>
    </location>
</feature>
<feature type="helix" evidence="5">
    <location>
        <begin position="71"/>
        <end position="73"/>
    </location>
</feature>
<feature type="strand" evidence="5">
    <location>
        <begin position="74"/>
        <end position="78"/>
    </location>
</feature>
<feature type="strand" evidence="5">
    <location>
        <begin position="81"/>
        <end position="86"/>
    </location>
</feature>
<feature type="strand" evidence="5">
    <location>
        <begin position="89"/>
        <end position="96"/>
    </location>
</feature>
<feature type="turn" evidence="5">
    <location>
        <begin position="97"/>
        <end position="100"/>
    </location>
</feature>
<feature type="strand" evidence="5">
    <location>
        <begin position="101"/>
        <end position="106"/>
    </location>
</feature>
<feature type="helix" evidence="5">
    <location>
        <begin position="113"/>
        <end position="127"/>
    </location>
</feature>
<feature type="strand" evidence="5">
    <location>
        <begin position="132"/>
        <end position="134"/>
    </location>
</feature>
<feature type="strand" evidence="5">
    <location>
        <begin position="140"/>
        <end position="147"/>
    </location>
</feature>
<feature type="strand" evidence="5">
    <location>
        <begin position="154"/>
        <end position="161"/>
    </location>
</feature>
<feature type="strand" evidence="5">
    <location>
        <begin position="170"/>
        <end position="173"/>
    </location>
</feature>
<feature type="strand" evidence="5">
    <location>
        <begin position="177"/>
        <end position="179"/>
    </location>
</feature>
<feature type="strand" evidence="5">
    <location>
        <begin position="182"/>
        <end position="192"/>
    </location>
</feature>
<feature type="turn" evidence="5">
    <location>
        <begin position="193"/>
        <end position="195"/>
    </location>
</feature>
<feature type="helix" evidence="5">
    <location>
        <begin position="198"/>
        <end position="214"/>
    </location>
</feature>
<organism>
    <name type="scientific">Escherichia coli</name>
    <dbReference type="NCBI Taxonomy" id="562"/>
    <lineage>
        <taxon>Bacteria</taxon>
        <taxon>Pseudomonadati</taxon>
        <taxon>Pseudomonadota</taxon>
        <taxon>Gammaproteobacteria</taxon>
        <taxon>Enterobacterales</taxon>
        <taxon>Enterobacteriaceae</taxon>
        <taxon>Escherichia</taxon>
    </lineage>
</organism>
<gene>
    <name type="primary">cat</name>
</gene>
<accession>P62577</accession>
<accession>P00483</accession>
<comment type="function">
    <text>This enzyme is an effector of chloramphenicol resistance in bacteria.</text>
</comment>
<comment type="catalytic activity">
    <reaction evidence="1">
        <text>chloramphenicol + acetyl-CoA = chloramphenicol 3-acetate + CoA</text>
        <dbReference type="Rhea" id="RHEA:18421"/>
        <dbReference type="ChEBI" id="CHEBI:16730"/>
        <dbReference type="ChEBI" id="CHEBI:17698"/>
        <dbReference type="ChEBI" id="CHEBI:57287"/>
        <dbReference type="ChEBI" id="CHEBI:57288"/>
        <dbReference type="EC" id="2.3.1.28"/>
    </reaction>
</comment>
<comment type="subunit">
    <text evidence="2">Homotrimer.</text>
</comment>
<comment type="biotechnology">
    <text>This protein is used as a marker in many commonly used cloning vectors, such as pACYC184.</text>
</comment>
<comment type="miscellaneous">
    <text evidence="4">Transposon Tncam204 is derived from the R plasmid NR1.</text>
</comment>
<comment type="similarity">
    <text evidence="3">Belongs to the chloramphenicol acetyltransferase family.</text>
</comment>
<comment type="online information" name="Wikipedia">
    <link uri="https://en.wikipedia.org/wiki/Chloramphenicol_acetyltransferase"/>
    <text>Chloramphenicol acetyltransferase entry</text>
</comment>
<geneLocation type="plasmid">
    <name>JR66B</name>
</geneLocation>
<name>CAT_ECOLX</name>
<keyword id="KW-0002">3D-structure</keyword>
<keyword id="KW-0012">Acyltransferase</keyword>
<keyword id="KW-0046">Antibiotic resistance</keyword>
<keyword id="KW-0903">Direct protein sequencing</keyword>
<keyword id="KW-0614">Plasmid</keyword>
<keyword id="KW-0808">Transferase</keyword>
<keyword id="KW-0814">Transposable element</keyword>
<sequence>MEKKITGYTTVDISQWHRKEHFEAFQSVAQCTYNQTVQLDITAFLKTVKKNKHKFYPAFIHILARLMNAHPEFRMAMKDGELVIWDSVHPCYTVFHEQTETFSSLWSEYHDDFRQFLHIYSQDVACYGENLAYFPKGFIENMFFVSANPWVSFTSFDLNVANMDNFFAPVFTMGKYYTQGDKVLMPLAIQVHHAVCDGFHVGRMLNELQQYCDEWQGGA</sequence>
<evidence type="ECO:0000255" key="1">
    <source>
        <dbReference type="PROSITE-ProRule" id="PRU10021"/>
    </source>
</evidence>
<evidence type="ECO:0000269" key="2">
    <source>
    </source>
</evidence>
<evidence type="ECO:0000305" key="3"/>
<evidence type="ECO:0000305" key="4">
    <source>
    </source>
</evidence>
<evidence type="ECO:0007829" key="5">
    <source>
        <dbReference type="PDB" id="1Q23"/>
    </source>
</evidence>
<protein>
    <recommendedName>
        <fullName>Chloramphenicol acetyltransferase</fullName>
        <shortName>CAT</shortName>
        <ecNumber>2.3.1.28</ecNumber>
    </recommendedName>
</protein>
<proteinExistence type="evidence at protein level"/>